<dbReference type="EC" id="1.1.1.103" evidence="1"/>
<dbReference type="EMBL" id="CP000915">
    <property type="protein sequence ID" value="ACD31206.1"/>
    <property type="molecule type" value="Genomic_DNA"/>
</dbReference>
<dbReference type="SMR" id="B2SDJ2"/>
<dbReference type="KEGG" id="ftm:FTM_1369"/>
<dbReference type="HOGENOM" id="CLU_026673_11_0_6"/>
<dbReference type="UniPathway" id="UPA00046">
    <property type="reaction ID" value="UER00505"/>
</dbReference>
<dbReference type="GO" id="GO:0005737">
    <property type="term" value="C:cytoplasm"/>
    <property type="evidence" value="ECO:0007669"/>
    <property type="project" value="UniProtKB-SubCell"/>
</dbReference>
<dbReference type="GO" id="GO:0008743">
    <property type="term" value="F:L-threonine 3-dehydrogenase activity"/>
    <property type="evidence" value="ECO:0007669"/>
    <property type="project" value="UniProtKB-UniRule"/>
</dbReference>
<dbReference type="GO" id="GO:0008270">
    <property type="term" value="F:zinc ion binding"/>
    <property type="evidence" value="ECO:0007669"/>
    <property type="project" value="UniProtKB-UniRule"/>
</dbReference>
<dbReference type="GO" id="GO:0019518">
    <property type="term" value="P:L-threonine catabolic process to glycine"/>
    <property type="evidence" value="ECO:0007669"/>
    <property type="project" value="UniProtKB-UniPathway"/>
</dbReference>
<dbReference type="Gene3D" id="3.90.180.10">
    <property type="entry name" value="Medium-chain alcohol dehydrogenases, catalytic domain"/>
    <property type="match status" value="1"/>
</dbReference>
<dbReference type="Gene3D" id="3.40.50.720">
    <property type="entry name" value="NAD(P)-binding Rossmann-like Domain"/>
    <property type="match status" value="1"/>
</dbReference>
<dbReference type="HAMAP" id="MF_00627">
    <property type="entry name" value="Thr_dehydrog"/>
    <property type="match status" value="1"/>
</dbReference>
<dbReference type="InterPro" id="IPR013149">
    <property type="entry name" value="ADH-like_C"/>
</dbReference>
<dbReference type="InterPro" id="IPR013154">
    <property type="entry name" value="ADH-like_N"/>
</dbReference>
<dbReference type="InterPro" id="IPR002328">
    <property type="entry name" value="ADH_Zn_CS"/>
</dbReference>
<dbReference type="InterPro" id="IPR011032">
    <property type="entry name" value="GroES-like_sf"/>
</dbReference>
<dbReference type="InterPro" id="IPR004627">
    <property type="entry name" value="L-Threonine_3-DHase"/>
</dbReference>
<dbReference type="InterPro" id="IPR036291">
    <property type="entry name" value="NAD(P)-bd_dom_sf"/>
</dbReference>
<dbReference type="InterPro" id="IPR050129">
    <property type="entry name" value="Zn_alcohol_dh"/>
</dbReference>
<dbReference type="NCBIfam" id="NF003808">
    <property type="entry name" value="PRK05396.1"/>
    <property type="match status" value="1"/>
</dbReference>
<dbReference type="NCBIfam" id="TIGR00692">
    <property type="entry name" value="tdh"/>
    <property type="match status" value="1"/>
</dbReference>
<dbReference type="PANTHER" id="PTHR43401">
    <property type="entry name" value="L-THREONINE 3-DEHYDROGENASE"/>
    <property type="match status" value="1"/>
</dbReference>
<dbReference type="PANTHER" id="PTHR43401:SF2">
    <property type="entry name" value="L-THREONINE 3-DEHYDROGENASE"/>
    <property type="match status" value="1"/>
</dbReference>
<dbReference type="Pfam" id="PF08240">
    <property type="entry name" value="ADH_N"/>
    <property type="match status" value="1"/>
</dbReference>
<dbReference type="Pfam" id="PF00107">
    <property type="entry name" value="ADH_zinc_N"/>
    <property type="match status" value="1"/>
</dbReference>
<dbReference type="SUPFAM" id="SSF50129">
    <property type="entry name" value="GroES-like"/>
    <property type="match status" value="1"/>
</dbReference>
<dbReference type="SUPFAM" id="SSF51735">
    <property type="entry name" value="NAD(P)-binding Rossmann-fold domains"/>
    <property type="match status" value="1"/>
</dbReference>
<dbReference type="PROSITE" id="PS00059">
    <property type="entry name" value="ADH_ZINC"/>
    <property type="match status" value="1"/>
</dbReference>
<keyword id="KW-0963">Cytoplasm</keyword>
<keyword id="KW-0479">Metal-binding</keyword>
<keyword id="KW-0520">NAD</keyword>
<keyword id="KW-0560">Oxidoreductase</keyword>
<keyword id="KW-0862">Zinc</keyword>
<reference key="1">
    <citation type="journal article" date="2009" name="PLoS Pathog.">
        <title>Molecular evolutionary consequences of niche restriction in Francisella tularensis, a facultative intracellular pathogen.</title>
        <authorList>
            <person name="Larsson P."/>
            <person name="Elfsmark D."/>
            <person name="Svensson K."/>
            <person name="Wikstroem P."/>
            <person name="Forsman M."/>
            <person name="Brettin T."/>
            <person name="Keim P."/>
            <person name="Johansson A."/>
        </authorList>
    </citation>
    <scope>NUCLEOTIDE SEQUENCE [LARGE SCALE GENOMIC DNA]</scope>
    <source>
        <strain>FSC147</strain>
    </source>
</reference>
<gene>
    <name evidence="1" type="primary">tdh</name>
    <name type="ordered locus">FTM_1369</name>
</gene>
<evidence type="ECO:0000255" key="1">
    <source>
        <dbReference type="HAMAP-Rule" id="MF_00627"/>
    </source>
</evidence>
<sequence length="351" mass="38410">MKALAKLKKQPGIWIINDAPIPEYGYNDVLIKIKKTAICGTDLHIYNWDKWSQNTIPVPMITGHEFAGEVVAKGDGVTSVDIGDRVSGEGHLVCGQCRNCRAGKRHLCRKTIGIGVNVQGAFAEYLVMPAVNVFKIPDSISDDIASTFDPMGNAIHTALSFNLTGEDVLITGAGPIGLMVVKIARFCGARRIVITDINEYRLQMARDFGATVALNVAPFKNQDELVKQMRKVMSDIGMTEGFDVGLEMSGINSAISMMLDVMNHGGKLSLLGISAGDISVDWGAILFKGLTLKGIYGREMFETWYLMTSMLQAGMDMNPIITHRLHIDEFQKGFEIMKSGQCGKVILDWSS</sequence>
<proteinExistence type="inferred from homology"/>
<name>TDH_FRATM</name>
<accession>B2SDJ2</accession>
<organism>
    <name type="scientific">Francisella tularensis subsp. mediasiatica (strain FSC147)</name>
    <dbReference type="NCBI Taxonomy" id="441952"/>
    <lineage>
        <taxon>Bacteria</taxon>
        <taxon>Pseudomonadati</taxon>
        <taxon>Pseudomonadota</taxon>
        <taxon>Gammaproteobacteria</taxon>
        <taxon>Thiotrichales</taxon>
        <taxon>Francisellaceae</taxon>
        <taxon>Francisella</taxon>
    </lineage>
</organism>
<protein>
    <recommendedName>
        <fullName evidence="1">L-threonine 3-dehydrogenase</fullName>
        <shortName evidence="1">TDH</shortName>
        <ecNumber evidence="1">1.1.1.103</ecNumber>
    </recommendedName>
</protein>
<feature type="chain" id="PRO_1000130553" description="L-threonine 3-dehydrogenase">
    <location>
        <begin position="1"/>
        <end position="351"/>
    </location>
</feature>
<feature type="active site" description="Charge relay system" evidence="1">
    <location>
        <position position="41"/>
    </location>
</feature>
<feature type="active site" description="Charge relay system" evidence="1">
    <location>
        <position position="44"/>
    </location>
</feature>
<feature type="binding site" evidence="1">
    <location>
        <position position="39"/>
    </location>
    <ligand>
        <name>Zn(2+)</name>
        <dbReference type="ChEBI" id="CHEBI:29105"/>
        <label>1</label>
        <note>catalytic</note>
    </ligand>
</feature>
<feature type="binding site" evidence="1">
    <location>
        <position position="64"/>
    </location>
    <ligand>
        <name>Zn(2+)</name>
        <dbReference type="ChEBI" id="CHEBI:29105"/>
        <label>1</label>
        <note>catalytic</note>
    </ligand>
</feature>
<feature type="binding site" evidence="1">
    <location>
        <position position="65"/>
    </location>
    <ligand>
        <name>Zn(2+)</name>
        <dbReference type="ChEBI" id="CHEBI:29105"/>
        <label>1</label>
        <note>catalytic</note>
    </ligand>
</feature>
<feature type="binding site" evidence="1">
    <location>
        <position position="94"/>
    </location>
    <ligand>
        <name>Zn(2+)</name>
        <dbReference type="ChEBI" id="CHEBI:29105"/>
        <label>2</label>
    </ligand>
</feature>
<feature type="binding site" evidence="1">
    <location>
        <position position="97"/>
    </location>
    <ligand>
        <name>Zn(2+)</name>
        <dbReference type="ChEBI" id="CHEBI:29105"/>
        <label>2</label>
    </ligand>
</feature>
<feature type="binding site" evidence="1">
    <location>
        <position position="100"/>
    </location>
    <ligand>
        <name>Zn(2+)</name>
        <dbReference type="ChEBI" id="CHEBI:29105"/>
        <label>2</label>
    </ligand>
</feature>
<feature type="binding site" evidence="1">
    <location>
        <position position="108"/>
    </location>
    <ligand>
        <name>Zn(2+)</name>
        <dbReference type="ChEBI" id="CHEBI:29105"/>
        <label>2</label>
    </ligand>
</feature>
<feature type="binding site" evidence="1">
    <location>
        <position position="176"/>
    </location>
    <ligand>
        <name>NAD(+)</name>
        <dbReference type="ChEBI" id="CHEBI:57540"/>
    </ligand>
</feature>
<feature type="binding site" evidence="1">
    <location>
        <position position="196"/>
    </location>
    <ligand>
        <name>NAD(+)</name>
        <dbReference type="ChEBI" id="CHEBI:57540"/>
    </ligand>
</feature>
<feature type="binding site" evidence="1">
    <location>
        <position position="201"/>
    </location>
    <ligand>
        <name>NAD(+)</name>
        <dbReference type="ChEBI" id="CHEBI:57540"/>
    </ligand>
</feature>
<feature type="binding site" evidence="1">
    <location>
        <begin position="271"/>
        <end position="273"/>
    </location>
    <ligand>
        <name>NAD(+)</name>
        <dbReference type="ChEBI" id="CHEBI:57540"/>
    </ligand>
</feature>
<feature type="binding site" evidence="1">
    <location>
        <begin position="295"/>
        <end position="296"/>
    </location>
    <ligand>
        <name>NAD(+)</name>
        <dbReference type="ChEBI" id="CHEBI:57540"/>
    </ligand>
</feature>
<feature type="site" description="Important for catalytic activity for the proton relay mechanism but does not participate directly in the coordination of zinc atom" evidence="1">
    <location>
        <position position="149"/>
    </location>
</feature>
<comment type="function">
    <text evidence="1">Catalyzes the NAD(+)-dependent oxidation of L-threonine to 2-amino-3-ketobutyrate.</text>
</comment>
<comment type="catalytic activity">
    <reaction evidence="1">
        <text>L-threonine + NAD(+) = (2S)-2-amino-3-oxobutanoate + NADH + H(+)</text>
        <dbReference type="Rhea" id="RHEA:13161"/>
        <dbReference type="ChEBI" id="CHEBI:15378"/>
        <dbReference type="ChEBI" id="CHEBI:57540"/>
        <dbReference type="ChEBI" id="CHEBI:57926"/>
        <dbReference type="ChEBI" id="CHEBI:57945"/>
        <dbReference type="ChEBI" id="CHEBI:78948"/>
        <dbReference type="EC" id="1.1.1.103"/>
    </reaction>
</comment>
<comment type="cofactor">
    <cofactor evidence="1">
        <name>Zn(2+)</name>
        <dbReference type="ChEBI" id="CHEBI:29105"/>
    </cofactor>
    <text evidence="1">Binds 2 Zn(2+) ions per subunit.</text>
</comment>
<comment type="pathway">
    <text evidence="1">Amino-acid degradation; L-threonine degradation via oxydo-reductase pathway; glycine from L-threonine: step 1/2.</text>
</comment>
<comment type="subunit">
    <text evidence="1">Homotetramer.</text>
</comment>
<comment type="subcellular location">
    <subcellularLocation>
        <location evidence="1">Cytoplasm</location>
    </subcellularLocation>
</comment>
<comment type="similarity">
    <text evidence="1">Belongs to the zinc-containing alcohol dehydrogenase family.</text>
</comment>